<feature type="chain" id="PRO_1000047947" description="Protein RecA">
    <location>
        <begin position="1"/>
        <end position="337"/>
    </location>
</feature>
<feature type="binding site" evidence="1">
    <location>
        <begin position="66"/>
        <end position="73"/>
    </location>
    <ligand>
        <name>ATP</name>
        <dbReference type="ChEBI" id="CHEBI:30616"/>
    </ligand>
</feature>
<proteinExistence type="inferred from homology"/>
<comment type="function">
    <text evidence="1">Can catalyze the hydrolysis of ATP in the presence of single-stranded DNA, the ATP-dependent uptake of single-stranded DNA by duplex DNA, and the ATP-dependent hybridization of homologous single-stranded DNAs. It interacts with LexA causing its activation and leading to its autocatalytic cleavage.</text>
</comment>
<comment type="subcellular location">
    <subcellularLocation>
        <location evidence="1">Cytoplasm</location>
    </subcellularLocation>
</comment>
<comment type="similarity">
    <text evidence="1">Belongs to the RecA family.</text>
</comment>
<evidence type="ECO:0000255" key="1">
    <source>
        <dbReference type="HAMAP-Rule" id="MF_00268"/>
    </source>
</evidence>
<accession>Q4AAV6</accession>
<gene>
    <name evidence="1" type="primary">recA</name>
    <name type="ordered locus">MHJ_0035</name>
</gene>
<name>RECA_MESHJ</name>
<sequence length="337" mass="36593">MTEINEKSLLKQALAEIKKKFGNESIMVLGEKPPIDTEVFSSGSMAIDMALGIGGFPKGRIVEIYGPESSGKTTISLHAIAEVQKQGGIAAFIDAEHSIDPQYAKNLGIDIDNLILSQPDSGEQALDIVDTLTKTKAIDLIVVDSVAALVPMAELQGEMKDQVIGAQARLMSKALRKITASLNKNGTTVIFINQIREKVGVIFGNPETTPGGRGLKFYASIRLDVRKIQQITSGNDITGHSVKIKVVKNKLAIPFKTALVEIVFAKGISKSAEIAQLGEELGILVRKGSWFAYKGENIAQGKVNLKLLLENNTKLFNEIKDQIIEKLKENQQQSQTL</sequence>
<protein>
    <recommendedName>
        <fullName evidence="1">Protein RecA</fullName>
    </recommendedName>
    <alternativeName>
        <fullName evidence="1">Recombinase A</fullName>
    </alternativeName>
</protein>
<dbReference type="EMBL" id="AE017243">
    <property type="protein sequence ID" value="AAZ44129.2"/>
    <property type="molecule type" value="Genomic_DNA"/>
</dbReference>
<dbReference type="RefSeq" id="WP_044284570.1">
    <property type="nucleotide sequence ID" value="NC_007295.1"/>
</dbReference>
<dbReference type="SMR" id="Q4AAV6"/>
<dbReference type="GeneID" id="41334323"/>
<dbReference type="KEGG" id="mhj:MHJ_0035"/>
<dbReference type="eggNOG" id="COG0468">
    <property type="taxonomic scope" value="Bacteria"/>
</dbReference>
<dbReference type="HOGENOM" id="CLU_040469_1_2_14"/>
<dbReference type="OrthoDB" id="9776733at2"/>
<dbReference type="Proteomes" id="UP000000548">
    <property type="component" value="Chromosome"/>
</dbReference>
<dbReference type="GO" id="GO:0005829">
    <property type="term" value="C:cytosol"/>
    <property type="evidence" value="ECO:0007669"/>
    <property type="project" value="TreeGrafter"/>
</dbReference>
<dbReference type="GO" id="GO:0005524">
    <property type="term" value="F:ATP binding"/>
    <property type="evidence" value="ECO:0007669"/>
    <property type="project" value="UniProtKB-UniRule"/>
</dbReference>
<dbReference type="GO" id="GO:0016887">
    <property type="term" value="F:ATP hydrolysis activity"/>
    <property type="evidence" value="ECO:0007669"/>
    <property type="project" value="InterPro"/>
</dbReference>
<dbReference type="GO" id="GO:0140664">
    <property type="term" value="F:ATP-dependent DNA damage sensor activity"/>
    <property type="evidence" value="ECO:0007669"/>
    <property type="project" value="InterPro"/>
</dbReference>
<dbReference type="GO" id="GO:0003684">
    <property type="term" value="F:damaged DNA binding"/>
    <property type="evidence" value="ECO:0007669"/>
    <property type="project" value="UniProtKB-UniRule"/>
</dbReference>
<dbReference type="GO" id="GO:0003697">
    <property type="term" value="F:single-stranded DNA binding"/>
    <property type="evidence" value="ECO:0007669"/>
    <property type="project" value="UniProtKB-UniRule"/>
</dbReference>
<dbReference type="GO" id="GO:0006310">
    <property type="term" value="P:DNA recombination"/>
    <property type="evidence" value="ECO:0007669"/>
    <property type="project" value="UniProtKB-UniRule"/>
</dbReference>
<dbReference type="GO" id="GO:0006281">
    <property type="term" value="P:DNA repair"/>
    <property type="evidence" value="ECO:0007669"/>
    <property type="project" value="UniProtKB-UniRule"/>
</dbReference>
<dbReference type="GO" id="GO:0009432">
    <property type="term" value="P:SOS response"/>
    <property type="evidence" value="ECO:0007669"/>
    <property type="project" value="UniProtKB-UniRule"/>
</dbReference>
<dbReference type="CDD" id="cd00983">
    <property type="entry name" value="RecA"/>
    <property type="match status" value="1"/>
</dbReference>
<dbReference type="FunFam" id="3.40.50.300:FF:000087">
    <property type="entry name" value="Recombinase RecA"/>
    <property type="match status" value="1"/>
</dbReference>
<dbReference type="Gene3D" id="3.40.50.300">
    <property type="entry name" value="P-loop containing nucleotide triphosphate hydrolases"/>
    <property type="match status" value="1"/>
</dbReference>
<dbReference type="HAMAP" id="MF_00268">
    <property type="entry name" value="RecA"/>
    <property type="match status" value="1"/>
</dbReference>
<dbReference type="InterPro" id="IPR003593">
    <property type="entry name" value="AAA+_ATPase"/>
</dbReference>
<dbReference type="InterPro" id="IPR013765">
    <property type="entry name" value="DNA_recomb/repair_RecA"/>
</dbReference>
<dbReference type="InterPro" id="IPR027417">
    <property type="entry name" value="P-loop_NTPase"/>
</dbReference>
<dbReference type="InterPro" id="IPR049261">
    <property type="entry name" value="RecA-like_C"/>
</dbReference>
<dbReference type="InterPro" id="IPR049428">
    <property type="entry name" value="RecA-like_N"/>
</dbReference>
<dbReference type="InterPro" id="IPR020588">
    <property type="entry name" value="RecA_ATP-bd"/>
</dbReference>
<dbReference type="InterPro" id="IPR023400">
    <property type="entry name" value="RecA_C_sf"/>
</dbReference>
<dbReference type="InterPro" id="IPR020587">
    <property type="entry name" value="RecA_monomer-monomer_interface"/>
</dbReference>
<dbReference type="NCBIfam" id="TIGR02012">
    <property type="entry name" value="tigrfam_recA"/>
    <property type="match status" value="1"/>
</dbReference>
<dbReference type="PANTHER" id="PTHR45900:SF1">
    <property type="entry name" value="MITOCHONDRIAL DNA REPAIR PROTEIN RECA HOMOLOG-RELATED"/>
    <property type="match status" value="1"/>
</dbReference>
<dbReference type="PANTHER" id="PTHR45900">
    <property type="entry name" value="RECA"/>
    <property type="match status" value="1"/>
</dbReference>
<dbReference type="Pfam" id="PF00154">
    <property type="entry name" value="RecA"/>
    <property type="match status" value="1"/>
</dbReference>
<dbReference type="Pfam" id="PF21096">
    <property type="entry name" value="RecA_C"/>
    <property type="match status" value="1"/>
</dbReference>
<dbReference type="PRINTS" id="PR00142">
    <property type="entry name" value="RECA"/>
</dbReference>
<dbReference type="SMART" id="SM00382">
    <property type="entry name" value="AAA"/>
    <property type="match status" value="1"/>
</dbReference>
<dbReference type="SUPFAM" id="SSF52540">
    <property type="entry name" value="P-loop containing nucleoside triphosphate hydrolases"/>
    <property type="match status" value="1"/>
</dbReference>
<dbReference type="SUPFAM" id="SSF54752">
    <property type="entry name" value="RecA protein, C-terminal domain"/>
    <property type="match status" value="1"/>
</dbReference>
<dbReference type="PROSITE" id="PS50162">
    <property type="entry name" value="RECA_2"/>
    <property type="match status" value="1"/>
</dbReference>
<dbReference type="PROSITE" id="PS50163">
    <property type="entry name" value="RECA_3"/>
    <property type="match status" value="1"/>
</dbReference>
<reference key="1">
    <citation type="journal article" date="2005" name="J. Bacteriol.">
        <title>Swine and poultry pathogens: the complete genome sequences of two strains of Mycoplasma hyopneumoniae and a strain of Mycoplasma synoviae.</title>
        <authorList>
            <person name="Vasconcelos A.T.R."/>
            <person name="Ferreira H.B."/>
            <person name="Bizarro C.V."/>
            <person name="Bonatto S.L."/>
            <person name="Carvalho M.O."/>
            <person name="Pinto P.M."/>
            <person name="Almeida D.F."/>
            <person name="Almeida L.G.P."/>
            <person name="Almeida R."/>
            <person name="Alves-Junior L."/>
            <person name="Assuncao E.N."/>
            <person name="Azevedo V.A.C."/>
            <person name="Bogo M.R."/>
            <person name="Brigido M.M."/>
            <person name="Brocchi M."/>
            <person name="Burity H.A."/>
            <person name="Camargo A.A."/>
            <person name="Camargo S.S."/>
            <person name="Carepo M.S."/>
            <person name="Carraro D.M."/>
            <person name="de Mattos Cascardo J.C."/>
            <person name="Castro L.A."/>
            <person name="Cavalcanti G."/>
            <person name="Chemale G."/>
            <person name="Collevatti R.G."/>
            <person name="Cunha C.W."/>
            <person name="Dallagiovanna B."/>
            <person name="Dambros B.P."/>
            <person name="Dellagostin O.A."/>
            <person name="Falcao C."/>
            <person name="Fantinatti-Garboggini F."/>
            <person name="Felipe M.S.S."/>
            <person name="Fiorentin L."/>
            <person name="Franco G.R."/>
            <person name="Freitas N.S.A."/>
            <person name="Frias D."/>
            <person name="Grangeiro T.B."/>
            <person name="Grisard E.C."/>
            <person name="Guimaraes C.T."/>
            <person name="Hungria M."/>
            <person name="Jardim S.N."/>
            <person name="Krieger M.A."/>
            <person name="Laurino J.P."/>
            <person name="Lima L.F.A."/>
            <person name="Lopes M.I."/>
            <person name="Loreto E.L.S."/>
            <person name="Madeira H.M.F."/>
            <person name="Manfio G.P."/>
            <person name="Maranhao A.Q."/>
            <person name="Martinkovics C.T."/>
            <person name="Medeiros S.R.B."/>
            <person name="Moreira M.A.M."/>
            <person name="Neiva M."/>
            <person name="Ramalho-Neto C.E."/>
            <person name="Nicolas M.F."/>
            <person name="Oliveira S.C."/>
            <person name="Paixao R.F.C."/>
            <person name="Pedrosa F.O."/>
            <person name="Pena S.D.J."/>
            <person name="Pereira M."/>
            <person name="Pereira-Ferrari L."/>
            <person name="Piffer I."/>
            <person name="Pinto L.S."/>
            <person name="Potrich D.P."/>
            <person name="Salim A.C.M."/>
            <person name="Santos F.R."/>
            <person name="Schmitt R."/>
            <person name="Schneider M.P.C."/>
            <person name="Schrank A."/>
            <person name="Schrank I.S."/>
            <person name="Schuck A.F."/>
            <person name="Seuanez H.N."/>
            <person name="Silva D.W."/>
            <person name="Silva R."/>
            <person name="Silva S.C."/>
            <person name="Soares C.M.A."/>
            <person name="Souza K.R.L."/>
            <person name="Souza R.C."/>
            <person name="Staats C.C."/>
            <person name="Steffens M.B.R."/>
            <person name="Teixeira S.M.R."/>
            <person name="Urmenyi T.P."/>
            <person name="Vainstein M.H."/>
            <person name="Zuccherato L.W."/>
            <person name="Simpson A.J.G."/>
            <person name="Zaha A."/>
        </authorList>
    </citation>
    <scope>NUCLEOTIDE SEQUENCE [LARGE SCALE GENOMIC DNA]</scope>
    <source>
        <strain>J / ATCC 25934 / NCTC 10110</strain>
    </source>
</reference>
<organism>
    <name type="scientific">Mesomycoplasma hyopneumoniae (strain J / ATCC 25934 / NCTC 10110)</name>
    <name type="common">Mycoplasma hyopneumoniae</name>
    <dbReference type="NCBI Taxonomy" id="262719"/>
    <lineage>
        <taxon>Bacteria</taxon>
        <taxon>Bacillati</taxon>
        <taxon>Mycoplasmatota</taxon>
        <taxon>Mycoplasmoidales</taxon>
        <taxon>Metamycoplasmataceae</taxon>
        <taxon>Mesomycoplasma</taxon>
    </lineage>
</organism>
<keyword id="KW-0067">ATP-binding</keyword>
<keyword id="KW-0963">Cytoplasm</keyword>
<keyword id="KW-0227">DNA damage</keyword>
<keyword id="KW-0233">DNA recombination</keyword>
<keyword id="KW-0234">DNA repair</keyword>
<keyword id="KW-0238">DNA-binding</keyword>
<keyword id="KW-0547">Nucleotide-binding</keyword>
<keyword id="KW-0742">SOS response</keyword>